<evidence type="ECO:0000255" key="1">
    <source>
        <dbReference type="HAMAP-Rule" id="MF_01523"/>
    </source>
</evidence>
<name>RSMJ_SHEPC</name>
<protein>
    <recommendedName>
        <fullName evidence="1">Ribosomal RNA small subunit methyltransferase J</fullName>
        <ecNumber evidence="1">2.1.1.242</ecNumber>
    </recommendedName>
    <alternativeName>
        <fullName evidence="1">16S rRNA m2G1516 methyltransferase</fullName>
    </alternativeName>
    <alternativeName>
        <fullName evidence="1">rRNA (guanine-N(2)-)-methyltransferase</fullName>
    </alternativeName>
</protein>
<reference key="1">
    <citation type="submission" date="2007-04" db="EMBL/GenBank/DDBJ databases">
        <title>Complete sequence of Shewanella putrefaciens CN-32.</title>
        <authorList>
            <consortium name="US DOE Joint Genome Institute"/>
            <person name="Copeland A."/>
            <person name="Lucas S."/>
            <person name="Lapidus A."/>
            <person name="Barry K."/>
            <person name="Detter J.C."/>
            <person name="Glavina del Rio T."/>
            <person name="Hammon N."/>
            <person name="Israni S."/>
            <person name="Dalin E."/>
            <person name="Tice H."/>
            <person name="Pitluck S."/>
            <person name="Chain P."/>
            <person name="Malfatti S."/>
            <person name="Shin M."/>
            <person name="Vergez L."/>
            <person name="Schmutz J."/>
            <person name="Larimer F."/>
            <person name="Land M."/>
            <person name="Hauser L."/>
            <person name="Kyrpides N."/>
            <person name="Mikhailova N."/>
            <person name="Romine M.F."/>
            <person name="Fredrickson J."/>
            <person name="Tiedje J."/>
            <person name="Richardson P."/>
        </authorList>
    </citation>
    <scope>NUCLEOTIDE SEQUENCE [LARGE SCALE GENOMIC DNA]</scope>
    <source>
        <strain>CN-32 / ATCC BAA-453</strain>
    </source>
</reference>
<keyword id="KW-0963">Cytoplasm</keyword>
<keyword id="KW-0489">Methyltransferase</keyword>
<keyword id="KW-0698">rRNA processing</keyword>
<keyword id="KW-0949">S-adenosyl-L-methionine</keyword>
<keyword id="KW-0808">Transferase</keyword>
<accession>A4Y1K3</accession>
<dbReference type="EC" id="2.1.1.242" evidence="1"/>
<dbReference type="EMBL" id="CP000681">
    <property type="protein sequence ID" value="ABP73836.1"/>
    <property type="molecule type" value="Genomic_DNA"/>
</dbReference>
<dbReference type="SMR" id="A4Y1K3"/>
<dbReference type="STRING" id="319224.Sputcn32_0100"/>
<dbReference type="KEGG" id="spc:Sputcn32_0100"/>
<dbReference type="eggNOG" id="COG0742">
    <property type="taxonomic scope" value="Bacteria"/>
</dbReference>
<dbReference type="HOGENOM" id="CLU_076324_0_1_6"/>
<dbReference type="GO" id="GO:0005737">
    <property type="term" value="C:cytoplasm"/>
    <property type="evidence" value="ECO:0007669"/>
    <property type="project" value="UniProtKB-SubCell"/>
</dbReference>
<dbReference type="GO" id="GO:0008990">
    <property type="term" value="F:rRNA (guanine-N2-)-methyltransferase activity"/>
    <property type="evidence" value="ECO:0007669"/>
    <property type="project" value="UniProtKB-UniRule"/>
</dbReference>
<dbReference type="CDD" id="cd02440">
    <property type="entry name" value="AdoMet_MTases"/>
    <property type="match status" value="1"/>
</dbReference>
<dbReference type="Gene3D" id="3.40.50.150">
    <property type="entry name" value="Vaccinia Virus protein VP39"/>
    <property type="match status" value="1"/>
</dbReference>
<dbReference type="Gene3D" id="3.40.1630.10">
    <property type="entry name" value="YhiQ-like domain"/>
    <property type="match status" value="1"/>
</dbReference>
<dbReference type="HAMAP" id="MF_01523">
    <property type="entry name" value="16SrRNA_methyltr_J"/>
    <property type="match status" value="1"/>
</dbReference>
<dbReference type="InterPro" id="IPR007536">
    <property type="entry name" value="16SrRNA_methylTrfase_J"/>
</dbReference>
<dbReference type="InterPro" id="IPR029063">
    <property type="entry name" value="SAM-dependent_MTases_sf"/>
</dbReference>
<dbReference type="PANTHER" id="PTHR36112">
    <property type="entry name" value="RIBOSOMAL RNA SMALL SUBUNIT METHYLTRANSFERASE J"/>
    <property type="match status" value="1"/>
</dbReference>
<dbReference type="PANTHER" id="PTHR36112:SF1">
    <property type="entry name" value="RIBOSOMAL RNA SMALL SUBUNIT METHYLTRANSFERASE J"/>
    <property type="match status" value="1"/>
</dbReference>
<dbReference type="Pfam" id="PF04445">
    <property type="entry name" value="SAM_MT"/>
    <property type="match status" value="1"/>
</dbReference>
<dbReference type="SUPFAM" id="SSF53335">
    <property type="entry name" value="S-adenosyl-L-methionine-dependent methyltransferases"/>
    <property type="match status" value="1"/>
</dbReference>
<feature type="chain" id="PRO_0000316263" description="Ribosomal RNA small subunit methyltransferase J">
    <location>
        <begin position="1"/>
        <end position="259"/>
    </location>
</feature>
<feature type="binding site" evidence="1">
    <location>
        <begin position="109"/>
        <end position="110"/>
    </location>
    <ligand>
        <name>S-adenosyl-L-methionine</name>
        <dbReference type="ChEBI" id="CHEBI:59789"/>
    </ligand>
</feature>
<feature type="binding site" evidence="1">
    <location>
        <begin position="125"/>
        <end position="126"/>
    </location>
    <ligand>
        <name>S-adenosyl-L-methionine</name>
        <dbReference type="ChEBI" id="CHEBI:59789"/>
    </ligand>
</feature>
<feature type="binding site" evidence="1">
    <location>
        <begin position="161"/>
        <end position="162"/>
    </location>
    <ligand>
        <name>S-adenosyl-L-methionine</name>
        <dbReference type="ChEBI" id="CHEBI:59789"/>
    </ligand>
</feature>
<feature type="binding site" evidence="1">
    <location>
        <position position="179"/>
    </location>
    <ligand>
        <name>S-adenosyl-L-methionine</name>
        <dbReference type="ChEBI" id="CHEBI:59789"/>
    </ligand>
</feature>
<sequence length="259" mass="28723">MTAILLVRRQPVTPIFFNQQYPTLVDICARWQLIYDANAPFELRFESDSLTLHKRDEPKLDGILVDFVTGAVAHRRKFGGGRGQSIAKAVGLKQGVTPSVVDGTAGLGRDAFVLASLGCTVTMVERHPVVAALLEDGLRRAYQDAEIGDWMHERMQLFHGSSLEALSKLEQEVDVVYLDPMYPHRDKSALVKKEMRVFQSLVGADLDADGLLAPALALATKRVVVKRPDYAEDLDGVKPSMVIDTKKNRFDVYVKAAMK</sequence>
<organism>
    <name type="scientific">Shewanella putrefaciens (strain CN-32 / ATCC BAA-453)</name>
    <dbReference type="NCBI Taxonomy" id="319224"/>
    <lineage>
        <taxon>Bacteria</taxon>
        <taxon>Pseudomonadati</taxon>
        <taxon>Pseudomonadota</taxon>
        <taxon>Gammaproteobacteria</taxon>
        <taxon>Alteromonadales</taxon>
        <taxon>Shewanellaceae</taxon>
        <taxon>Shewanella</taxon>
    </lineage>
</organism>
<proteinExistence type="inferred from homology"/>
<gene>
    <name evidence="1" type="primary">rsmJ</name>
    <name type="ordered locus">Sputcn32_0100</name>
</gene>
<comment type="function">
    <text evidence="1">Specifically methylates the guanosine in position 1516 of 16S rRNA.</text>
</comment>
<comment type="catalytic activity">
    <reaction evidence="1">
        <text>guanosine(1516) in 16S rRNA + S-adenosyl-L-methionine = N(2)-methylguanosine(1516) in 16S rRNA + S-adenosyl-L-homocysteine + H(+)</text>
        <dbReference type="Rhea" id="RHEA:43220"/>
        <dbReference type="Rhea" id="RHEA-COMP:10412"/>
        <dbReference type="Rhea" id="RHEA-COMP:10413"/>
        <dbReference type="ChEBI" id="CHEBI:15378"/>
        <dbReference type="ChEBI" id="CHEBI:57856"/>
        <dbReference type="ChEBI" id="CHEBI:59789"/>
        <dbReference type="ChEBI" id="CHEBI:74269"/>
        <dbReference type="ChEBI" id="CHEBI:74481"/>
        <dbReference type="EC" id="2.1.1.242"/>
    </reaction>
</comment>
<comment type="subcellular location">
    <subcellularLocation>
        <location evidence="1">Cytoplasm</location>
    </subcellularLocation>
</comment>
<comment type="similarity">
    <text evidence="1">Belongs to the methyltransferase superfamily. RsmJ family.</text>
</comment>